<name>MIAB_XANOM</name>
<accession>Q2P266</accession>
<feature type="chain" id="PRO_0000374648" description="tRNA-2-methylthio-N(6)-dimethylallyladenosine synthase">
    <location>
        <begin position="1"/>
        <end position="484"/>
    </location>
</feature>
<feature type="domain" description="MTTase N-terminal" evidence="1">
    <location>
        <begin position="36"/>
        <end position="153"/>
    </location>
</feature>
<feature type="domain" description="Radical SAM core" evidence="2">
    <location>
        <begin position="176"/>
        <end position="415"/>
    </location>
</feature>
<feature type="domain" description="TRAM" evidence="1">
    <location>
        <begin position="416"/>
        <end position="479"/>
    </location>
</feature>
<feature type="region of interest" description="Disordered" evidence="3">
    <location>
        <begin position="428"/>
        <end position="450"/>
    </location>
</feature>
<feature type="binding site" evidence="1">
    <location>
        <position position="45"/>
    </location>
    <ligand>
        <name>[4Fe-4S] cluster</name>
        <dbReference type="ChEBI" id="CHEBI:49883"/>
        <label>1</label>
    </ligand>
</feature>
<feature type="binding site" evidence="1">
    <location>
        <position position="82"/>
    </location>
    <ligand>
        <name>[4Fe-4S] cluster</name>
        <dbReference type="ChEBI" id="CHEBI:49883"/>
        <label>1</label>
    </ligand>
</feature>
<feature type="binding site" evidence="1">
    <location>
        <position position="116"/>
    </location>
    <ligand>
        <name>[4Fe-4S] cluster</name>
        <dbReference type="ChEBI" id="CHEBI:49883"/>
        <label>1</label>
    </ligand>
</feature>
<feature type="binding site" evidence="1">
    <location>
        <position position="190"/>
    </location>
    <ligand>
        <name>[4Fe-4S] cluster</name>
        <dbReference type="ChEBI" id="CHEBI:49883"/>
        <label>2</label>
        <note>4Fe-4S-S-AdoMet</note>
    </ligand>
</feature>
<feature type="binding site" evidence="1">
    <location>
        <position position="194"/>
    </location>
    <ligand>
        <name>[4Fe-4S] cluster</name>
        <dbReference type="ChEBI" id="CHEBI:49883"/>
        <label>2</label>
        <note>4Fe-4S-S-AdoMet</note>
    </ligand>
</feature>
<feature type="binding site" evidence="1">
    <location>
        <position position="197"/>
    </location>
    <ligand>
        <name>[4Fe-4S] cluster</name>
        <dbReference type="ChEBI" id="CHEBI:49883"/>
        <label>2</label>
        <note>4Fe-4S-S-AdoMet</note>
    </ligand>
</feature>
<reference key="1">
    <citation type="journal article" date="2005" name="Jpn. Agric. Res. Q.">
        <title>Genome sequence of Xanthomonas oryzae pv. oryzae suggests contribution of large numbers of effector genes and insertion sequences to its race diversity.</title>
        <authorList>
            <person name="Ochiai H."/>
            <person name="Inoue Y."/>
            <person name="Takeya M."/>
            <person name="Sasaki A."/>
            <person name="Kaku H."/>
        </authorList>
    </citation>
    <scope>NUCLEOTIDE SEQUENCE [LARGE SCALE GENOMIC DNA]</scope>
    <source>
        <strain>MAFF 311018</strain>
    </source>
</reference>
<protein>
    <recommendedName>
        <fullName evidence="1">tRNA-2-methylthio-N(6)-dimethylallyladenosine synthase</fullName>
        <ecNumber evidence="1">2.8.4.3</ecNumber>
    </recommendedName>
    <alternativeName>
        <fullName evidence="1">(Dimethylallyl)adenosine tRNA methylthiotransferase MiaB</fullName>
    </alternativeName>
    <alternativeName>
        <fullName evidence="1">tRNA-i(6)A37 methylthiotransferase</fullName>
    </alternativeName>
</protein>
<proteinExistence type="inferred from homology"/>
<sequence>MPGTSVSDLSTATAVDAPALLPLPVARPSAPAVVRGKLYIKTHGCQMNEYDSAKMADVLAASEGLELTDNPEEADVVLVNTCSIREKAQEKVFSQLGRWKALKAGGKPVIIGVGGCVASQEGEAIVKRAPYVDLVFGPQTLHRLPELIRARRESGKSQVDISFPEIEKFDRLPEPRAEGPSAFVSIMEGCSKYCSFCVVPYTRGEEVSRPFEDVLVEVAQLAAQGVREINLLGQNVNAYRGAYGADAGDAAQYADLGLLIRTIAQIEGIGRIRFTTSHPLEFSDSLVDAYRDVPQLANYLHLPVQAGSDRILSAMKRGYTALEFKSRIRKLRAVRPDISISSDFIVGFPGETEADFEKTMKLIEDVGFDQSFSFVYSRRPGTPASDLQDDTPETVKQARLARLQAHISAHAASISQSMVGSVQRVLVEGPSRRDPNELTGKSENMRPVNFPGNPRLIGQFVDVLITEAMSNSLRGRIQLDDSAH</sequence>
<evidence type="ECO:0000255" key="1">
    <source>
        <dbReference type="HAMAP-Rule" id="MF_01864"/>
    </source>
</evidence>
<evidence type="ECO:0000255" key="2">
    <source>
        <dbReference type="PROSITE-ProRule" id="PRU01266"/>
    </source>
</evidence>
<evidence type="ECO:0000256" key="3">
    <source>
        <dbReference type="SAM" id="MobiDB-lite"/>
    </source>
</evidence>
<keyword id="KW-0004">4Fe-4S</keyword>
<keyword id="KW-0963">Cytoplasm</keyword>
<keyword id="KW-0408">Iron</keyword>
<keyword id="KW-0411">Iron-sulfur</keyword>
<keyword id="KW-0479">Metal-binding</keyword>
<keyword id="KW-0949">S-adenosyl-L-methionine</keyword>
<keyword id="KW-0808">Transferase</keyword>
<keyword id="KW-0819">tRNA processing</keyword>
<comment type="function">
    <text evidence="1">Catalyzes the methylthiolation of N6-(dimethylallyl)adenosine (i(6)A), leading to the formation of 2-methylthio-N6-(dimethylallyl)adenosine (ms(2)i(6)A) at position 37 in tRNAs that read codons beginning with uridine.</text>
</comment>
<comment type="catalytic activity">
    <reaction evidence="1">
        <text>N(6)-dimethylallyladenosine(37) in tRNA + (sulfur carrier)-SH + AH2 + 2 S-adenosyl-L-methionine = 2-methylsulfanyl-N(6)-dimethylallyladenosine(37) in tRNA + (sulfur carrier)-H + 5'-deoxyadenosine + L-methionine + A + S-adenosyl-L-homocysteine + 2 H(+)</text>
        <dbReference type="Rhea" id="RHEA:37067"/>
        <dbReference type="Rhea" id="RHEA-COMP:10375"/>
        <dbReference type="Rhea" id="RHEA-COMP:10376"/>
        <dbReference type="Rhea" id="RHEA-COMP:14737"/>
        <dbReference type="Rhea" id="RHEA-COMP:14739"/>
        <dbReference type="ChEBI" id="CHEBI:13193"/>
        <dbReference type="ChEBI" id="CHEBI:15378"/>
        <dbReference type="ChEBI" id="CHEBI:17319"/>
        <dbReference type="ChEBI" id="CHEBI:17499"/>
        <dbReference type="ChEBI" id="CHEBI:29917"/>
        <dbReference type="ChEBI" id="CHEBI:57844"/>
        <dbReference type="ChEBI" id="CHEBI:57856"/>
        <dbReference type="ChEBI" id="CHEBI:59789"/>
        <dbReference type="ChEBI" id="CHEBI:64428"/>
        <dbReference type="ChEBI" id="CHEBI:74415"/>
        <dbReference type="ChEBI" id="CHEBI:74417"/>
        <dbReference type="EC" id="2.8.4.3"/>
    </reaction>
</comment>
<comment type="cofactor">
    <cofactor evidence="1">
        <name>[4Fe-4S] cluster</name>
        <dbReference type="ChEBI" id="CHEBI:49883"/>
    </cofactor>
    <text evidence="1">Binds 2 [4Fe-4S] clusters. One cluster is coordinated with 3 cysteines and an exchangeable S-adenosyl-L-methionine.</text>
</comment>
<comment type="subunit">
    <text evidence="1">Monomer.</text>
</comment>
<comment type="subcellular location">
    <subcellularLocation>
        <location evidence="1">Cytoplasm</location>
    </subcellularLocation>
</comment>
<comment type="similarity">
    <text evidence="1">Belongs to the methylthiotransferase family. MiaB subfamily.</text>
</comment>
<gene>
    <name evidence="1" type="primary">miaB</name>
    <name type="ordered locus">XOO2606</name>
</gene>
<organism>
    <name type="scientific">Xanthomonas oryzae pv. oryzae (strain MAFF 311018)</name>
    <dbReference type="NCBI Taxonomy" id="342109"/>
    <lineage>
        <taxon>Bacteria</taxon>
        <taxon>Pseudomonadati</taxon>
        <taxon>Pseudomonadota</taxon>
        <taxon>Gammaproteobacteria</taxon>
        <taxon>Lysobacterales</taxon>
        <taxon>Lysobacteraceae</taxon>
        <taxon>Xanthomonas</taxon>
    </lineage>
</organism>
<dbReference type="EC" id="2.8.4.3" evidence="1"/>
<dbReference type="EMBL" id="AP008229">
    <property type="protein sequence ID" value="BAE69361.1"/>
    <property type="molecule type" value="Genomic_DNA"/>
</dbReference>
<dbReference type="RefSeq" id="WP_011408766.1">
    <property type="nucleotide sequence ID" value="NC_007705.1"/>
</dbReference>
<dbReference type="SMR" id="Q2P266"/>
<dbReference type="KEGG" id="xom:XOO2606"/>
<dbReference type="HOGENOM" id="CLU_018697_2_2_6"/>
<dbReference type="GO" id="GO:0005829">
    <property type="term" value="C:cytosol"/>
    <property type="evidence" value="ECO:0007669"/>
    <property type="project" value="TreeGrafter"/>
</dbReference>
<dbReference type="GO" id="GO:0051539">
    <property type="term" value="F:4 iron, 4 sulfur cluster binding"/>
    <property type="evidence" value="ECO:0007669"/>
    <property type="project" value="UniProtKB-UniRule"/>
</dbReference>
<dbReference type="GO" id="GO:0046872">
    <property type="term" value="F:metal ion binding"/>
    <property type="evidence" value="ECO:0007669"/>
    <property type="project" value="UniProtKB-KW"/>
</dbReference>
<dbReference type="GO" id="GO:0035597">
    <property type="term" value="F:N6-isopentenyladenosine methylthiotransferase activity"/>
    <property type="evidence" value="ECO:0007669"/>
    <property type="project" value="TreeGrafter"/>
</dbReference>
<dbReference type="CDD" id="cd01335">
    <property type="entry name" value="Radical_SAM"/>
    <property type="match status" value="1"/>
</dbReference>
<dbReference type="FunFam" id="3.40.50.12160:FF:000001">
    <property type="entry name" value="tRNA-2-methylthio-N(6)-dimethylallyladenosine synthase"/>
    <property type="match status" value="1"/>
</dbReference>
<dbReference type="FunFam" id="3.80.30.20:FF:000001">
    <property type="entry name" value="tRNA-2-methylthio-N(6)-dimethylallyladenosine synthase 2"/>
    <property type="match status" value="1"/>
</dbReference>
<dbReference type="Gene3D" id="3.40.50.12160">
    <property type="entry name" value="Methylthiotransferase, N-terminal domain"/>
    <property type="match status" value="1"/>
</dbReference>
<dbReference type="Gene3D" id="3.80.30.20">
    <property type="entry name" value="tm_1862 like domain"/>
    <property type="match status" value="1"/>
</dbReference>
<dbReference type="HAMAP" id="MF_01864">
    <property type="entry name" value="tRNA_metthiotr_MiaB"/>
    <property type="match status" value="1"/>
</dbReference>
<dbReference type="InterPro" id="IPR006638">
    <property type="entry name" value="Elp3/MiaA/NifB-like_rSAM"/>
</dbReference>
<dbReference type="InterPro" id="IPR005839">
    <property type="entry name" value="Methylthiotransferase"/>
</dbReference>
<dbReference type="InterPro" id="IPR020612">
    <property type="entry name" value="Methylthiotransferase_CS"/>
</dbReference>
<dbReference type="InterPro" id="IPR013848">
    <property type="entry name" value="Methylthiotransferase_N"/>
</dbReference>
<dbReference type="InterPro" id="IPR038135">
    <property type="entry name" value="Methylthiotransferase_N_sf"/>
</dbReference>
<dbReference type="InterPro" id="IPR006463">
    <property type="entry name" value="MiaB_methiolase"/>
</dbReference>
<dbReference type="InterPro" id="IPR007197">
    <property type="entry name" value="rSAM"/>
</dbReference>
<dbReference type="InterPro" id="IPR023404">
    <property type="entry name" value="rSAM_horseshoe"/>
</dbReference>
<dbReference type="InterPro" id="IPR002792">
    <property type="entry name" value="TRAM_dom"/>
</dbReference>
<dbReference type="NCBIfam" id="TIGR01574">
    <property type="entry name" value="miaB-methiolase"/>
    <property type="match status" value="1"/>
</dbReference>
<dbReference type="NCBIfam" id="TIGR00089">
    <property type="entry name" value="MiaB/RimO family radical SAM methylthiotransferase"/>
    <property type="match status" value="1"/>
</dbReference>
<dbReference type="PANTHER" id="PTHR43020">
    <property type="entry name" value="CDK5 REGULATORY SUBUNIT-ASSOCIATED PROTEIN 1"/>
    <property type="match status" value="1"/>
</dbReference>
<dbReference type="PANTHER" id="PTHR43020:SF2">
    <property type="entry name" value="MITOCHONDRIAL TRNA METHYLTHIOTRANSFERASE CDK5RAP1"/>
    <property type="match status" value="1"/>
</dbReference>
<dbReference type="Pfam" id="PF04055">
    <property type="entry name" value="Radical_SAM"/>
    <property type="match status" value="1"/>
</dbReference>
<dbReference type="Pfam" id="PF01938">
    <property type="entry name" value="TRAM"/>
    <property type="match status" value="1"/>
</dbReference>
<dbReference type="Pfam" id="PF00919">
    <property type="entry name" value="UPF0004"/>
    <property type="match status" value="1"/>
</dbReference>
<dbReference type="SFLD" id="SFLDF00273">
    <property type="entry name" value="(dimethylallyl)adenosine_tRNA"/>
    <property type="match status" value="1"/>
</dbReference>
<dbReference type="SFLD" id="SFLDG01082">
    <property type="entry name" value="B12-binding_domain_containing"/>
    <property type="match status" value="1"/>
</dbReference>
<dbReference type="SFLD" id="SFLDS00029">
    <property type="entry name" value="Radical_SAM"/>
    <property type="match status" value="1"/>
</dbReference>
<dbReference type="SMART" id="SM00729">
    <property type="entry name" value="Elp3"/>
    <property type="match status" value="1"/>
</dbReference>
<dbReference type="SUPFAM" id="SSF102114">
    <property type="entry name" value="Radical SAM enzymes"/>
    <property type="match status" value="1"/>
</dbReference>
<dbReference type="PROSITE" id="PS51449">
    <property type="entry name" value="MTTASE_N"/>
    <property type="match status" value="1"/>
</dbReference>
<dbReference type="PROSITE" id="PS01278">
    <property type="entry name" value="MTTASE_RADICAL"/>
    <property type="match status" value="1"/>
</dbReference>
<dbReference type="PROSITE" id="PS51918">
    <property type="entry name" value="RADICAL_SAM"/>
    <property type="match status" value="1"/>
</dbReference>
<dbReference type="PROSITE" id="PS50926">
    <property type="entry name" value="TRAM"/>
    <property type="match status" value="1"/>
</dbReference>